<comment type="function">
    <text evidence="1 5 6 8 9 10 11 12 13">Heterodimerizes with IL12B to form the IL-12 cytokine or with EBI3/IL27B to form the IL-35 cytokine (PubMed:8605935, PubMed:8943050). IL-12 is primarily produced by professional antigen-presenting cells (APCs) such as B-cells and dendritic cells (DCs) as well as macrophages and granulocytes and regulates T-cell and natural killer-cell responses, induces the production of interferon-gamma (IFN-gamma), favors the differentiation of T-helper 1 (Th1) cells and is an important link between innate resistance and adaptive immunity (PubMed:1673147, PubMed:1674604, PubMed:8605935). Mechanistically, exerts its biological effects through a receptor composed of IL12R1 and IL12R2 subunits (PubMed:8943050). Binding to the receptor results in the rapid tyrosine phosphorylation of a number of cellular substrates including the JAK family kinases TYK2 and JAK2 (PubMed:7528775). In turn, recruited STAT4 gets phosphorylated and translocates to the nucleus where it regulates cytokine/growth factor responsive genes (PubMed:7638186). As part of IL-35, plays essential roles in maintaining the immune homeostasis of the liver microenvironment and also functions as an immune-suppressive cytokine (By similarity). Mediates biological events through unconventional receptors composed of IL12RB2 and gp130/IL6ST heterodimers or homodimers (PubMed:22306691). Signaling requires the transcription factors STAT1 and STAT4, which form a unique heterodimer that binds to distinct DNA sites (PubMed:22306691).</text>
</comment>
<comment type="subunit">
    <text evidence="1 3 6 14">Heterodimer with IL12B; disulfide-linked (PubMed:10899108, PubMed:1674604). This heterodimer is known as interleukin IL-12 (PubMed:1674604). Heterodimer with EBI3/IL27B; not disulfide-linked (PubMed:9342359). This heterodimer is known as interleukin IL-35 (PubMed:9342359). Interacts with NBR1; this interaction promotes IL-12 secretion (By similarity).</text>
</comment>
<comment type="interaction">
    <interactant intactId="EBI-1029636">
        <id>P29459</id>
    </interactant>
    <interactant intactId="EBI-1029614">
        <id>P29460</id>
        <label>IL12B</label>
    </interactant>
    <organismsDiffer>false</organismsDiffer>
    <experiments>2</experiments>
</comment>
<comment type="subcellular location">
    <subcellularLocation>
        <location evidence="6 14">Secreted</location>
    </subcellularLocation>
</comment>
<comment type="induction">
    <text evidence="4">(Microbial infection) By pathogenic organisms, including Gram- positive and Gram-negative bacteria, parasites, viruses, and fungi. Down-regulated in response to enterovirus 71 (EV71) infection.</text>
</comment>
<comment type="similarity">
    <text evidence="15">Belongs to the IL-6 superfamily.</text>
</comment>
<comment type="sequence caution" evidence="15">
    <conflict type="erroneous initiation">
        <sequence resource="EMBL-CDS" id="AAA59937"/>
    </conflict>
</comment>
<comment type="online information" name="Wikipedia">
    <link uri="https://en.wikipedia.org/wiki/Interleukin_12"/>
    <text>Interleukin-12 entry</text>
</comment>
<keyword id="KW-0002">3D-structure</keyword>
<keyword id="KW-0202">Cytokine</keyword>
<keyword id="KW-0903">Direct protein sequencing</keyword>
<keyword id="KW-1015">Disulfide bond</keyword>
<keyword id="KW-0325">Glycoprotein</keyword>
<keyword id="KW-0339">Growth factor</keyword>
<keyword id="KW-0945">Host-virus interaction</keyword>
<keyword id="KW-1267">Proteomics identification</keyword>
<keyword id="KW-1185">Reference proteome</keyword>
<keyword id="KW-0964">Secreted</keyword>
<keyword id="KW-0732">Signal</keyword>
<sequence length="219" mass="24874">MCPARSLLLVATLVLLDHLSLARNLPVATPDPGMFPCLHHSQNLLRAVSNMLQKARQTLEFYPCTSEEIDHEDITKDKTSTVEACLPLELTKNESCLNSRETSFITNGSCLASRKTSFMMALCLSSIYEDLKMYQVEFKTMNAKLLMDPKRQIFLDQNMLAVIDELMQALNFNSETVPQKSSLEEPDFYKTKIKLCILLHAFRIRAVTIDRVMSYLNAS</sequence>
<feature type="signal peptide" evidence="8">
    <location>
        <begin position="1"/>
        <end position="22"/>
    </location>
</feature>
<feature type="chain" id="PRO_0000015604" description="Interleukin-12 subunit alpha">
    <location>
        <begin position="23"/>
        <end position="219"/>
    </location>
</feature>
<feature type="glycosylation site" description="N-linked (GlcNAc...) asparagine" evidence="2">
    <location>
        <position position="93"/>
    </location>
</feature>
<feature type="glycosylation site" description="N-linked (GlcNAc...) asparagine" evidence="2">
    <location>
        <position position="107"/>
    </location>
</feature>
<feature type="disulfide bond" evidence="7">
    <location>
        <begin position="37"/>
        <end position="110"/>
    </location>
</feature>
<feature type="disulfide bond" evidence="3 7">
    <location>
        <begin position="64"/>
        <end position="196"/>
    </location>
</feature>
<feature type="disulfide bond" evidence="3 7">
    <location>
        <begin position="85"/>
        <end position="123"/>
    </location>
</feature>
<feature type="disulfide bond" description="Interchain (with C-199 in IL12B)" evidence="3">
    <location>
        <position position="96"/>
    </location>
</feature>
<feature type="sequence conflict" description="In Ref. 2; AAA35694." evidence="15" ref="2">
    <original>M</original>
    <variation>T</variation>
    <location>
        <position position="213"/>
    </location>
</feature>
<feature type="helix" evidence="17">
    <location>
        <begin position="43"/>
        <end position="58"/>
    </location>
</feature>
<feature type="helix" evidence="17">
    <location>
        <begin position="59"/>
        <end position="61"/>
    </location>
</feature>
<feature type="turn" evidence="18">
    <location>
        <begin position="74"/>
        <end position="78"/>
    </location>
</feature>
<feature type="helix" evidence="17">
    <location>
        <begin position="81"/>
        <end position="84"/>
    </location>
</feature>
<feature type="helix" evidence="17">
    <location>
        <begin position="88"/>
        <end position="92"/>
    </location>
</feature>
<feature type="strand" evidence="18">
    <location>
        <begin position="107"/>
        <end position="109"/>
    </location>
</feature>
<feature type="turn" evidence="18">
    <location>
        <begin position="114"/>
        <end position="116"/>
    </location>
</feature>
<feature type="helix" evidence="17">
    <location>
        <begin position="118"/>
        <end position="145"/>
    </location>
</feature>
<feature type="helix" evidence="17">
    <location>
        <begin position="155"/>
        <end position="169"/>
    </location>
</feature>
<feature type="helix" evidence="17">
    <location>
        <begin position="190"/>
        <end position="217"/>
    </location>
</feature>
<gene>
    <name type="primary">IL12A</name>
    <name type="synonym">NKSF1</name>
</gene>
<protein>
    <recommendedName>
        <fullName>Interleukin-12 subunit alpha</fullName>
        <shortName>IL-12A</shortName>
    </recommendedName>
    <alternativeName>
        <fullName>Cytotoxic lymphocyte maturation factor 35 kDa subunit</fullName>
        <shortName>CLMF p35</shortName>
    </alternativeName>
    <alternativeName>
        <fullName>IL-12 subunit p35</fullName>
    </alternativeName>
    <alternativeName>
        <fullName>NK cell stimulatory factor chain 1</fullName>
        <shortName>NKSF1</shortName>
    </alternativeName>
</protein>
<dbReference type="EMBL" id="M65291">
    <property type="protein sequence ID" value="AAA59937.1"/>
    <property type="status" value="ALT_INIT"/>
    <property type="molecule type" value="mRNA"/>
</dbReference>
<dbReference type="EMBL" id="M65271">
    <property type="protein sequence ID" value="AAA35694.1"/>
    <property type="molecule type" value="mRNA"/>
</dbReference>
<dbReference type="EMBL" id="AF404773">
    <property type="protein sequence ID" value="AAK84425.1"/>
    <property type="molecule type" value="Genomic_DNA"/>
</dbReference>
<dbReference type="EMBL" id="AC010370">
    <property type="status" value="NOT_ANNOTATED_CDS"/>
    <property type="molecule type" value="Genomic_DNA"/>
</dbReference>
<dbReference type="CCDS" id="CCDS93420.1"/>
<dbReference type="RefSeq" id="NP_000873.2">
    <property type="nucleotide sequence ID" value="NM_000882.3"/>
</dbReference>
<dbReference type="RefSeq" id="NP_001384921.1">
    <property type="nucleotide sequence ID" value="NM_001397992.1"/>
</dbReference>
<dbReference type="PDB" id="1F45">
    <property type="method" value="X-ray"/>
    <property type="resolution" value="2.80 A"/>
    <property type="chains" value="B=23-219"/>
</dbReference>
<dbReference type="PDB" id="3HMX">
    <property type="method" value="X-ray"/>
    <property type="resolution" value="3.00 A"/>
    <property type="chains" value="B=23-219"/>
</dbReference>
<dbReference type="PDB" id="8XRP">
    <property type="method" value="EM"/>
    <property type="resolution" value="3.75 A"/>
    <property type="chains" value="A/E/I/M=19-219"/>
</dbReference>
<dbReference type="PDB" id="8YI7">
    <property type="method" value="EM"/>
    <property type="resolution" value="3.57 A"/>
    <property type="chains" value="A=19-219"/>
</dbReference>
<dbReference type="PDBsum" id="1F45"/>
<dbReference type="PDBsum" id="3HMX"/>
<dbReference type="PDBsum" id="8XRP"/>
<dbReference type="PDBsum" id="8YI7"/>
<dbReference type="EMDB" id="EMD-21645"/>
<dbReference type="EMDB" id="EMD-38609"/>
<dbReference type="EMDB" id="EMD-39311"/>
<dbReference type="SMR" id="P29459"/>
<dbReference type="BioGRID" id="109806">
    <property type="interactions" value="17"/>
</dbReference>
<dbReference type="ComplexPortal" id="CPX-25744">
    <property type="entry name" value="Interleukin-35 complex"/>
</dbReference>
<dbReference type="ComplexPortal" id="CPX-381">
    <property type="entry name" value="Interleukin-12 complex"/>
</dbReference>
<dbReference type="CORUM" id="P29459"/>
<dbReference type="DIP" id="DIP-3772N"/>
<dbReference type="FunCoup" id="P29459">
    <property type="interactions" value="636"/>
</dbReference>
<dbReference type="IntAct" id="P29459">
    <property type="interactions" value="9"/>
</dbReference>
<dbReference type="STRING" id="9606.ENSP00000303231"/>
<dbReference type="ChEMBL" id="CHEMBL2364153"/>
<dbReference type="DrugBank" id="DB05611">
    <property type="generic name" value="Apilimod"/>
</dbReference>
<dbReference type="DrugCentral" id="P29459"/>
<dbReference type="GlyCosmos" id="P29459">
    <property type="glycosylation" value="2 sites, No reported glycans"/>
</dbReference>
<dbReference type="GlyGen" id="P29459">
    <property type="glycosylation" value="2 sites, 1 N-linked glycan (1 site)"/>
</dbReference>
<dbReference type="iPTMnet" id="P29459"/>
<dbReference type="PhosphoSitePlus" id="P29459"/>
<dbReference type="BioMuta" id="IL12A"/>
<dbReference type="DMDM" id="20141534"/>
<dbReference type="PaxDb" id="9606-ENSP00000303231"/>
<dbReference type="PeptideAtlas" id="P29459"/>
<dbReference type="ABCD" id="P29459">
    <property type="antibodies" value="1 sequenced antibody"/>
</dbReference>
<dbReference type="Antibodypedia" id="853">
    <property type="antibodies" value="1011 antibodies from 45 providers"/>
</dbReference>
<dbReference type="DNASU" id="3592"/>
<dbReference type="Ensembl" id="ENST00000699704.1">
    <property type="protein sequence ID" value="ENSP00000514529.1"/>
    <property type="gene ID" value="ENSG00000168811.8"/>
</dbReference>
<dbReference type="GeneID" id="3592"/>
<dbReference type="KEGG" id="hsa:3592"/>
<dbReference type="MANE-Select" id="ENST00000699704.1">
    <property type="protein sequence ID" value="ENSP00000514529.1"/>
    <property type="RefSeq nucleotide sequence ID" value="NM_001397992.1"/>
    <property type="RefSeq protein sequence ID" value="NP_001384921.1"/>
</dbReference>
<dbReference type="UCSC" id="uc003fcx.4">
    <property type="organism name" value="human"/>
</dbReference>
<dbReference type="AGR" id="HGNC:5969"/>
<dbReference type="CTD" id="3592"/>
<dbReference type="DisGeNET" id="3592"/>
<dbReference type="GeneCards" id="IL12A"/>
<dbReference type="HGNC" id="HGNC:5969">
    <property type="gene designation" value="IL12A"/>
</dbReference>
<dbReference type="HPA" id="ENSG00000168811">
    <property type="expression patterns" value="Tissue enhanced (esophagus)"/>
</dbReference>
<dbReference type="MalaCards" id="IL12A"/>
<dbReference type="MIM" id="161560">
    <property type="type" value="gene"/>
</dbReference>
<dbReference type="neXtProt" id="NX_P29459"/>
<dbReference type="OpenTargets" id="ENSG00000168811"/>
<dbReference type="Orphanet" id="117">
    <property type="disease" value="Behcet disease"/>
</dbReference>
<dbReference type="Orphanet" id="186">
    <property type="disease" value="Primary biliary cholangitis"/>
</dbReference>
<dbReference type="PharmGKB" id="PA29784"/>
<dbReference type="VEuPathDB" id="HostDB:ENSG00000168811"/>
<dbReference type="eggNOG" id="ENOG502S8JN">
    <property type="taxonomic scope" value="Eukaryota"/>
</dbReference>
<dbReference type="GeneTree" id="ENSGT00390000016906"/>
<dbReference type="InParanoid" id="P29459"/>
<dbReference type="OrthoDB" id="9893660at2759"/>
<dbReference type="PAN-GO" id="P29459">
    <property type="GO annotations" value="2 GO annotations based on evolutionary models"/>
</dbReference>
<dbReference type="PhylomeDB" id="P29459"/>
<dbReference type="TreeFam" id="TF330814"/>
<dbReference type="PathwayCommons" id="P29459"/>
<dbReference type="Reactome" id="R-HSA-6783783">
    <property type="pathway name" value="Interleukin-10 signaling"/>
</dbReference>
<dbReference type="Reactome" id="R-HSA-6785807">
    <property type="pathway name" value="Interleukin-4 and Interleukin-13 signaling"/>
</dbReference>
<dbReference type="Reactome" id="R-HSA-8984722">
    <property type="pathway name" value="Interleukin-35 Signalling"/>
</dbReference>
<dbReference type="Reactome" id="R-HSA-9020591">
    <property type="pathway name" value="Interleukin-12 signaling"/>
</dbReference>
<dbReference type="SignaLink" id="P29459"/>
<dbReference type="SIGNOR" id="P29459"/>
<dbReference type="BioGRID-ORCS" id="3592">
    <property type="hits" value="22 hits in 1153 CRISPR screens"/>
</dbReference>
<dbReference type="EvolutionaryTrace" id="P29459"/>
<dbReference type="GeneWiki" id="IL12A"/>
<dbReference type="GenomeRNAi" id="3592"/>
<dbReference type="Pharos" id="P29459">
    <property type="development level" value="Tclin"/>
</dbReference>
<dbReference type="PRO" id="PR:P29459"/>
<dbReference type="Proteomes" id="UP000005640">
    <property type="component" value="Chromosome 3"/>
</dbReference>
<dbReference type="RNAct" id="P29459">
    <property type="molecule type" value="protein"/>
</dbReference>
<dbReference type="Bgee" id="ENSG00000168811">
    <property type="expression patterns" value="Expressed in primordial germ cell in gonad and 98 other cell types or tissues"/>
</dbReference>
<dbReference type="ExpressionAtlas" id="P29459">
    <property type="expression patterns" value="baseline and differential"/>
</dbReference>
<dbReference type="GO" id="GO:0005788">
    <property type="term" value="C:endoplasmic reticulum lumen"/>
    <property type="evidence" value="ECO:0000304"/>
    <property type="project" value="Reactome"/>
</dbReference>
<dbReference type="GO" id="GO:0005576">
    <property type="term" value="C:extracellular region"/>
    <property type="evidence" value="ECO:0000304"/>
    <property type="project" value="Reactome"/>
</dbReference>
<dbReference type="GO" id="GO:0005615">
    <property type="term" value="C:extracellular space"/>
    <property type="evidence" value="ECO:0000314"/>
    <property type="project" value="UniProtKB"/>
</dbReference>
<dbReference type="GO" id="GO:0043514">
    <property type="term" value="C:interleukin-12 complex"/>
    <property type="evidence" value="ECO:0000314"/>
    <property type="project" value="UniProtKB"/>
</dbReference>
<dbReference type="GO" id="GO:0031906">
    <property type="term" value="C:late endosome lumen"/>
    <property type="evidence" value="ECO:0000304"/>
    <property type="project" value="Reactome"/>
</dbReference>
<dbReference type="GO" id="GO:0005125">
    <property type="term" value="F:cytokine activity"/>
    <property type="evidence" value="ECO:0000314"/>
    <property type="project" value="UniProt"/>
</dbReference>
<dbReference type="GO" id="GO:0008083">
    <property type="term" value="F:growth factor activity"/>
    <property type="evidence" value="ECO:0007669"/>
    <property type="project" value="UniProtKB-KW"/>
</dbReference>
<dbReference type="GO" id="GO:0042163">
    <property type="term" value="F:interleukin-12 beta subunit binding"/>
    <property type="evidence" value="ECO:0000353"/>
    <property type="project" value="AgBase"/>
</dbReference>
<dbReference type="GO" id="GO:0005143">
    <property type="term" value="F:interleukin-12 receptor binding"/>
    <property type="evidence" value="ECO:0000318"/>
    <property type="project" value="GO_Central"/>
</dbReference>
<dbReference type="GO" id="GO:0045513">
    <property type="term" value="F:interleukin-27 binding"/>
    <property type="evidence" value="ECO:0000353"/>
    <property type="project" value="UniProtKB"/>
</dbReference>
<dbReference type="GO" id="GO:0046982">
    <property type="term" value="F:protein heterodimerization activity"/>
    <property type="evidence" value="ECO:0000353"/>
    <property type="project" value="UniProtKB"/>
</dbReference>
<dbReference type="GO" id="GO:0016477">
    <property type="term" value="P:cell migration"/>
    <property type="evidence" value="ECO:0000314"/>
    <property type="project" value="UniProtKB"/>
</dbReference>
<dbReference type="GO" id="GO:0098586">
    <property type="term" value="P:cellular response to virus"/>
    <property type="evidence" value="ECO:0000315"/>
    <property type="project" value="UniProtKB"/>
</dbReference>
<dbReference type="GO" id="GO:0050830">
    <property type="term" value="P:defense response to Gram-positive bacterium"/>
    <property type="evidence" value="ECO:0000270"/>
    <property type="project" value="UniProtKB"/>
</dbReference>
<dbReference type="GO" id="GO:0097191">
    <property type="term" value="P:extrinsic apoptotic signaling pathway"/>
    <property type="evidence" value="ECO:0000314"/>
    <property type="project" value="BHF-UCL"/>
</dbReference>
<dbReference type="GO" id="GO:0006955">
    <property type="term" value="P:immune response"/>
    <property type="evidence" value="ECO:0000304"/>
    <property type="project" value="UniProtKB"/>
</dbReference>
<dbReference type="GO" id="GO:0035722">
    <property type="term" value="P:interleukin-12-mediated signaling pathway"/>
    <property type="evidence" value="ECO:0000314"/>
    <property type="project" value="UniProt"/>
</dbReference>
<dbReference type="GO" id="GO:1903588">
    <property type="term" value="P:negative regulation of blood vessel endothelial cell proliferation involved in sprouting angiogenesis"/>
    <property type="evidence" value="ECO:0000316"/>
    <property type="project" value="ARUK-UCL"/>
</dbReference>
<dbReference type="GO" id="GO:0032700">
    <property type="term" value="P:negative regulation of interleukin-17 production"/>
    <property type="evidence" value="ECO:0000314"/>
    <property type="project" value="BHF-UCL"/>
</dbReference>
<dbReference type="GO" id="GO:0050709">
    <property type="term" value="P:negative regulation of protein secretion"/>
    <property type="evidence" value="ECO:0000316"/>
    <property type="project" value="ARUK-UCL"/>
</dbReference>
<dbReference type="GO" id="GO:0048662">
    <property type="term" value="P:negative regulation of smooth muscle cell proliferation"/>
    <property type="evidence" value="ECO:0000314"/>
    <property type="project" value="BHF-UCL"/>
</dbReference>
<dbReference type="GO" id="GO:1900747">
    <property type="term" value="P:negative regulation of vascular endothelial growth factor signaling pathway"/>
    <property type="evidence" value="ECO:0000316"/>
    <property type="project" value="ARUK-UCL"/>
</dbReference>
<dbReference type="GO" id="GO:0045785">
    <property type="term" value="P:positive regulation of cell adhesion"/>
    <property type="evidence" value="ECO:0000314"/>
    <property type="project" value="UniProtKB"/>
</dbReference>
<dbReference type="GO" id="GO:2000510">
    <property type="term" value="P:positive regulation of dendritic cell chemotaxis"/>
    <property type="evidence" value="ECO:0000315"/>
    <property type="project" value="UniProtKB"/>
</dbReference>
<dbReference type="GO" id="GO:0050671">
    <property type="term" value="P:positive regulation of lymphocyte proliferation"/>
    <property type="evidence" value="ECO:0000314"/>
    <property type="project" value="UniProtKB"/>
</dbReference>
<dbReference type="GO" id="GO:0032946">
    <property type="term" value="P:positive regulation of mononuclear cell proliferation"/>
    <property type="evidence" value="ECO:0000315"/>
    <property type="project" value="AgBase"/>
</dbReference>
<dbReference type="GO" id="GO:0032816">
    <property type="term" value="P:positive regulation of natural killer cell activation"/>
    <property type="evidence" value="ECO:0000314"/>
    <property type="project" value="UniProtKB"/>
</dbReference>
<dbReference type="GO" id="GO:0045954">
    <property type="term" value="P:positive regulation of natural killer cell mediated cytotoxicity"/>
    <property type="evidence" value="ECO:0000314"/>
    <property type="project" value="UniProtKB"/>
</dbReference>
<dbReference type="GO" id="GO:0002860">
    <property type="term" value="P:positive regulation of natural killer cell mediated cytotoxicity directed against tumor cell target"/>
    <property type="evidence" value="ECO:0000314"/>
    <property type="project" value="UniProtKB"/>
</dbReference>
<dbReference type="GO" id="GO:0051135">
    <property type="term" value="P:positive regulation of NK T cell activation"/>
    <property type="evidence" value="ECO:0000314"/>
    <property type="project" value="BHF-UCL"/>
</dbReference>
<dbReference type="GO" id="GO:0034393">
    <property type="term" value="P:positive regulation of smooth muscle cell apoptotic process"/>
    <property type="evidence" value="ECO:0000314"/>
    <property type="project" value="BHF-UCL"/>
</dbReference>
<dbReference type="GO" id="GO:0001916">
    <property type="term" value="P:positive regulation of T cell mediated cytotoxicity"/>
    <property type="evidence" value="ECO:0000314"/>
    <property type="project" value="UniProtKB"/>
</dbReference>
<dbReference type="GO" id="GO:0032729">
    <property type="term" value="P:positive regulation of type II interferon production"/>
    <property type="evidence" value="ECO:0000314"/>
    <property type="project" value="UniProtKB"/>
</dbReference>
<dbReference type="GO" id="GO:0042531">
    <property type="term" value="P:positive regulation of tyrosine phosphorylation of STAT protein"/>
    <property type="evidence" value="ECO:0000314"/>
    <property type="project" value="UniProtKB"/>
</dbReference>
<dbReference type="GO" id="GO:0032496">
    <property type="term" value="P:response to lipopolysaccharide"/>
    <property type="evidence" value="ECO:0000314"/>
    <property type="project" value="UniProtKB"/>
</dbReference>
<dbReference type="GO" id="GO:0010224">
    <property type="term" value="P:response to UV-B"/>
    <property type="evidence" value="ECO:0000314"/>
    <property type="project" value="UniProtKB"/>
</dbReference>
<dbReference type="GO" id="GO:0009615">
    <property type="term" value="P:response to virus"/>
    <property type="evidence" value="ECO:0000270"/>
    <property type="project" value="UniProtKB"/>
</dbReference>
<dbReference type="FunFam" id="1.20.1250.10:FF:000020">
    <property type="entry name" value="Interleukin-12 subunit alpha"/>
    <property type="match status" value="1"/>
</dbReference>
<dbReference type="Gene3D" id="1.20.1250.10">
    <property type="match status" value="1"/>
</dbReference>
<dbReference type="InterPro" id="IPR009079">
    <property type="entry name" value="4_helix_cytokine-like_core"/>
</dbReference>
<dbReference type="InterPro" id="IPR050676">
    <property type="entry name" value="IL-12"/>
</dbReference>
<dbReference type="InterPro" id="IPR004281">
    <property type="entry name" value="IL-12_alpha"/>
</dbReference>
<dbReference type="PANTHER" id="PTHR48485:SF1">
    <property type="entry name" value="INTERLEUKIN-12 SUBUNIT ALPHA"/>
    <property type="match status" value="1"/>
</dbReference>
<dbReference type="PANTHER" id="PTHR48485">
    <property type="entry name" value="INTERLEUKIN-12 SUBUNIT BETA-RELATED"/>
    <property type="match status" value="1"/>
</dbReference>
<dbReference type="Pfam" id="PF03039">
    <property type="entry name" value="IL12"/>
    <property type="match status" value="1"/>
</dbReference>
<dbReference type="SUPFAM" id="SSF47266">
    <property type="entry name" value="4-helical cytokines"/>
    <property type="match status" value="1"/>
</dbReference>
<evidence type="ECO:0000250" key="1">
    <source>
        <dbReference type="UniProtKB" id="P43431"/>
    </source>
</evidence>
<evidence type="ECO:0000255" key="2"/>
<evidence type="ECO:0000269" key="3">
    <source>
    </source>
</evidence>
<evidence type="ECO:0000269" key="4">
    <source>
    </source>
</evidence>
<evidence type="ECO:0000269" key="5">
    <source>
    </source>
</evidence>
<evidence type="ECO:0000269" key="6">
    <source>
    </source>
</evidence>
<evidence type="ECO:0000269" key="7">
    <source>
    </source>
</evidence>
<evidence type="ECO:0000269" key="8">
    <source>
    </source>
</evidence>
<evidence type="ECO:0000269" key="9">
    <source>
    </source>
</evidence>
<evidence type="ECO:0000269" key="10">
    <source>
    </source>
</evidence>
<evidence type="ECO:0000269" key="11">
    <source>
    </source>
</evidence>
<evidence type="ECO:0000269" key="12">
    <source>
    </source>
</evidence>
<evidence type="ECO:0000269" key="13">
    <source>
    </source>
</evidence>
<evidence type="ECO:0000269" key="14">
    <source>
    </source>
</evidence>
<evidence type="ECO:0000305" key="15"/>
<evidence type="ECO:0007744" key="16">
    <source>
        <dbReference type="PDB" id="3HMX"/>
    </source>
</evidence>
<evidence type="ECO:0007829" key="17">
    <source>
        <dbReference type="PDB" id="1F45"/>
    </source>
</evidence>
<evidence type="ECO:0007829" key="18">
    <source>
        <dbReference type="PDB" id="3HMX"/>
    </source>
</evidence>
<name>IL12A_HUMAN</name>
<organism>
    <name type="scientific">Homo sapiens</name>
    <name type="common">Human</name>
    <dbReference type="NCBI Taxonomy" id="9606"/>
    <lineage>
        <taxon>Eukaryota</taxon>
        <taxon>Metazoa</taxon>
        <taxon>Chordata</taxon>
        <taxon>Craniata</taxon>
        <taxon>Vertebrata</taxon>
        <taxon>Euteleostomi</taxon>
        <taxon>Mammalia</taxon>
        <taxon>Eutheria</taxon>
        <taxon>Euarchontoglires</taxon>
        <taxon>Primates</taxon>
        <taxon>Haplorrhini</taxon>
        <taxon>Catarrhini</taxon>
        <taxon>Hominidae</taxon>
        <taxon>Homo</taxon>
    </lineage>
</organism>
<proteinExistence type="evidence at protein level"/>
<accession>P29459</accession>
<accession>Q96QZ1</accession>
<reference key="1">
    <citation type="journal article" date="1991" name="J. Immunol.">
        <title>Cloning of cDNA for natural killer cell stimulatory factor, a heterodimeric cytokine with multiple biologic effects on T and natural killer cells.</title>
        <authorList>
            <person name="Wolf S.F."/>
            <person name="Temple P.A."/>
            <person name="Kobayashi M."/>
            <person name="Young D."/>
            <person name="Dicig M."/>
            <person name="Lowe L."/>
            <person name="Dzialo R."/>
            <person name="Fitz L."/>
            <person name="Ferenz C."/>
            <person name="Hewick R.M."/>
            <person name="Kelleher K."/>
            <person name="Herrmann S.H."/>
            <person name="Clark S.C."/>
            <person name="Azzoni L."/>
            <person name="Chan S.H."/>
            <person name="Trinchieri G."/>
            <person name="Perussia B."/>
        </authorList>
    </citation>
    <scope>NUCLEOTIDE SEQUENCE [MRNA]</scope>
    <scope>FUNCTION</scope>
</reference>
<reference key="2">
    <citation type="journal article" date="1991" name="Proc. Natl. Acad. Sci. U.S.A.">
        <title>Coexpression of two distinct genes is required to generate secreted bioactive cytotoxic lymphocyte maturation factor.</title>
        <authorList>
            <person name="Gubler U."/>
            <person name="Chua A.O."/>
            <person name="Schoenhaut D.S."/>
            <person name="Dwyer C.M."/>
            <person name="McComas W."/>
            <person name="Motyka R."/>
            <person name="Nabavi N."/>
            <person name="Wolitzky A.G."/>
            <person name="Quinn P.M."/>
            <person name="Familletti P.C."/>
            <person name="Gately M.K."/>
        </authorList>
    </citation>
    <scope>NUCLEOTIDE SEQUENCE [MRNA]</scope>
    <scope>FUNCTION</scope>
    <scope>SUBUNIT</scope>
    <scope>SUBCELLULAR LOCATION</scope>
</reference>
<reference key="3">
    <citation type="submission" date="2001-07" db="EMBL/GenBank/DDBJ databases">
        <authorList>
            <consortium name="SeattleSNPs variation discovery resource"/>
        </authorList>
    </citation>
    <scope>NUCLEOTIDE SEQUENCE [GENOMIC DNA]</scope>
</reference>
<reference key="4">
    <citation type="journal article" date="2006" name="Nature">
        <title>The DNA sequence, annotation and analysis of human chromosome 3.</title>
        <authorList>
            <person name="Muzny D.M."/>
            <person name="Scherer S.E."/>
            <person name="Kaul R."/>
            <person name="Wang J."/>
            <person name="Yu J."/>
            <person name="Sudbrak R."/>
            <person name="Buhay C.J."/>
            <person name="Chen R."/>
            <person name="Cree A."/>
            <person name="Ding Y."/>
            <person name="Dugan-Rocha S."/>
            <person name="Gill R."/>
            <person name="Gunaratne P."/>
            <person name="Harris R.A."/>
            <person name="Hawes A.C."/>
            <person name="Hernandez J."/>
            <person name="Hodgson A.V."/>
            <person name="Hume J."/>
            <person name="Jackson A."/>
            <person name="Khan Z.M."/>
            <person name="Kovar-Smith C."/>
            <person name="Lewis L.R."/>
            <person name="Lozado R.J."/>
            <person name="Metzker M.L."/>
            <person name="Milosavljevic A."/>
            <person name="Miner G.R."/>
            <person name="Morgan M.B."/>
            <person name="Nazareth L.V."/>
            <person name="Scott G."/>
            <person name="Sodergren E."/>
            <person name="Song X.-Z."/>
            <person name="Steffen D."/>
            <person name="Wei S."/>
            <person name="Wheeler D.A."/>
            <person name="Wright M.W."/>
            <person name="Worley K.C."/>
            <person name="Yuan Y."/>
            <person name="Zhang Z."/>
            <person name="Adams C.Q."/>
            <person name="Ansari-Lari M.A."/>
            <person name="Ayele M."/>
            <person name="Brown M.J."/>
            <person name="Chen G."/>
            <person name="Chen Z."/>
            <person name="Clendenning J."/>
            <person name="Clerc-Blankenburg K.P."/>
            <person name="Chen R."/>
            <person name="Chen Z."/>
            <person name="Davis C."/>
            <person name="Delgado O."/>
            <person name="Dinh H.H."/>
            <person name="Dong W."/>
            <person name="Draper H."/>
            <person name="Ernst S."/>
            <person name="Fu G."/>
            <person name="Gonzalez-Garay M.L."/>
            <person name="Garcia D.K."/>
            <person name="Gillett W."/>
            <person name="Gu J."/>
            <person name="Hao B."/>
            <person name="Haugen E."/>
            <person name="Havlak P."/>
            <person name="He X."/>
            <person name="Hennig S."/>
            <person name="Hu S."/>
            <person name="Huang W."/>
            <person name="Jackson L.R."/>
            <person name="Jacob L.S."/>
            <person name="Kelly S.H."/>
            <person name="Kube M."/>
            <person name="Levy R."/>
            <person name="Li Z."/>
            <person name="Liu B."/>
            <person name="Liu J."/>
            <person name="Liu W."/>
            <person name="Lu J."/>
            <person name="Maheshwari M."/>
            <person name="Nguyen B.-V."/>
            <person name="Okwuonu G.O."/>
            <person name="Palmeiri A."/>
            <person name="Pasternak S."/>
            <person name="Perez L.M."/>
            <person name="Phelps K.A."/>
            <person name="Plopper F.J."/>
            <person name="Qiang B."/>
            <person name="Raymond C."/>
            <person name="Rodriguez R."/>
            <person name="Saenphimmachak C."/>
            <person name="Santibanez J."/>
            <person name="Shen H."/>
            <person name="Shen Y."/>
            <person name="Subramanian S."/>
            <person name="Tabor P.E."/>
            <person name="Verduzco D."/>
            <person name="Waldron L."/>
            <person name="Wang J."/>
            <person name="Wang J."/>
            <person name="Wang Q."/>
            <person name="Williams G.A."/>
            <person name="Wong G.K.-S."/>
            <person name="Yao Z."/>
            <person name="Zhang J."/>
            <person name="Zhang X."/>
            <person name="Zhao G."/>
            <person name="Zhou J."/>
            <person name="Zhou Y."/>
            <person name="Nelson D."/>
            <person name="Lehrach H."/>
            <person name="Reinhardt R."/>
            <person name="Naylor S.L."/>
            <person name="Yang H."/>
            <person name="Olson M."/>
            <person name="Weinstock G."/>
            <person name="Gibbs R.A."/>
        </authorList>
    </citation>
    <scope>NUCLEOTIDE SEQUENCE [LARGE SCALE GENOMIC DNA]</scope>
</reference>
<reference key="5">
    <citation type="journal article" date="1990" name="Proc. Natl. Acad. Sci. U.S.A.">
        <title>Purification to homogeneity and partial characterization of cytotoxic lymphocyte maturation factor from human B-lymphoblastoid cells.</title>
        <authorList>
            <person name="Stern A.S."/>
            <person name="Podlaski F.J."/>
            <person name="Hulmes J.D."/>
            <person name="Pan Y.C.E."/>
            <person name="Quinn P.M."/>
            <person name="Wolitzky A.G."/>
            <person name="Familletti P.C."/>
            <person name="Stremlo D.L."/>
            <person name="Truitt T."/>
            <person name="Chizzonite R."/>
            <person name="Gately M.K."/>
        </authorList>
    </citation>
    <scope>PROTEIN SEQUENCE OF 23-48</scope>
    <scope>FUNCTION</scope>
</reference>
<reference key="6">
    <citation type="journal article" date="1992" name="Immunol. Today">
        <title>Sequence similarity between NKSF and the IL-6/G-CSF family.</title>
        <authorList>
            <person name="Merberg D.M."/>
            <person name="Wolf S.F."/>
            <person name="Clark S.C."/>
        </authorList>
    </citation>
    <scope>SIMILARITY TO IL-6</scope>
</reference>
<reference key="7">
    <citation type="journal article" date="1995" name="J. Exp. Med.">
        <title>Interleukin 12 (IL-12) induces tyrosine phosphorylation of JAK2 and TYK2: differential use of Janus family tyrosine kinases by IL-2 and IL-12.</title>
        <authorList>
            <person name="Bacon C.M."/>
            <person name="McVicar D.W."/>
            <person name="Ortaldo J.R."/>
            <person name="Rees R.C."/>
            <person name="O'Shea J.J."/>
            <person name="Johnston J.A."/>
        </authorList>
    </citation>
    <scope>FUNCTION</scope>
</reference>
<reference key="8">
    <citation type="journal article" date="1995" name="Proc. Natl. Acad. Sci. U.S.A.">
        <title>Interleukin 12 induces tyrosine phosphorylation and activation of STAT4 in human lymphocytes.</title>
        <authorList>
            <person name="Bacon C.M."/>
            <person name="Petricoin E.F. III"/>
            <person name="Ortaldo J.R."/>
            <person name="Rees R.C."/>
            <person name="Larner A.C."/>
            <person name="Johnston J.A."/>
            <person name="O'Shea J.J."/>
        </authorList>
    </citation>
    <scope>FUNCTION IN STAT4 ACTIVATION</scope>
</reference>
<reference key="9">
    <citation type="journal article" date="1996" name="Eur. J. Immunol.">
        <title>Interleukin-12 is produced by dendritic cells and mediates T helper 1 development as well as interferon-gamma production by T helper 1 cells.</title>
        <authorList>
            <person name="Heufler C."/>
            <person name="Koch F."/>
            <person name="Stanzl U."/>
            <person name="Topar G."/>
            <person name="Wysocka M."/>
            <person name="Trinchieri G."/>
            <person name="Enk A."/>
            <person name="Steinman R.M."/>
            <person name="Romani N."/>
            <person name="Schuler G."/>
        </authorList>
    </citation>
    <scope>FUNCTION</scope>
</reference>
<reference key="10">
    <citation type="journal article" date="1996" name="Proc. Natl. Acad. Sci. U.S.A.">
        <title>A functional interleukin 12 receptor complex is composed of two beta-type cytokine receptor subunits.</title>
        <authorList>
            <person name="Presky D.H."/>
            <person name="Yang H."/>
            <person name="Minetti L.J."/>
            <person name="Chua A.O."/>
            <person name="Nabavi N."/>
            <person name="Wu C.-Y."/>
            <person name="Gately M.K."/>
            <person name="Gubler U."/>
        </authorList>
    </citation>
    <scope>FUNCTION</scope>
</reference>
<reference key="11">
    <citation type="journal article" date="1997" name="Proc. Natl. Acad. Sci. U.S.A.">
        <title>Epstein-Barr virus-induced gene 3 and the p35 subunit of interleukin 12 form a novel heterodimeric hematopoietin.</title>
        <authorList>
            <person name="Devergne O."/>
            <person name="Birkenbach M."/>
            <person name="Kieff E."/>
        </authorList>
    </citation>
    <scope>SUBUNIT</scope>
    <scope>SUBCELLULAR LOCATION</scope>
    <scope>FUNCTION</scope>
</reference>
<reference key="12">
    <citation type="journal article" date="2006" name="Cell. Microbiol.">
        <title>Transcriptomic and proteomic analyses of rhabdomyosarcoma cells reveal differential cellular gene expression in response to enterovirus 71 infection.</title>
        <authorList>
            <person name="Leong W.F."/>
            <person name="Chow V.T."/>
        </authorList>
    </citation>
    <scope>INDUCTION (MICROBIAL INFECTION)</scope>
    <scope>IDENTIFICATION BY MASS SPECTROMETRY</scope>
</reference>
<reference key="13">
    <citation type="journal article" date="2012" name="Nat. Immunol.">
        <title>The composition and signaling of the IL-35 receptor are unconventional.</title>
        <authorList>
            <person name="Collison L.W."/>
            <person name="Delgoffe G.M."/>
            <person name="Guy C.S."/>
            <person name="Vignali K.M."/>
            <person name="Chaturvedi V."/>
            <person name="Fairweather D."/>
            <person name="Satoskar A.R."/>
            <person name="Garcia K.C."/>
            <person name="Hunter C.A."/>
            <person name="Drake C.G."/>
            <person name="Murray P.J."/>
            <person name="Vignali D.A."/>
        </authorList>
    </citation>
    <scope>FUNCTION</scope>
</reference>
<reference key="14">
    <citation type="journal article" date="2000" name="EMBO J.">
        <title>Charged residues dominate a unique interlocking topography in the heterodimeric cytokine interleukin-12.</title>
        <authorList>
            <person name="Yoon C."/>
            <person name="Johnston S.C."/>
            <person name="Tang J."/>
            <person name="Stahl M."/>
            <person name="Tobin J.F."/>
            <person name="Somers W.S."/>
        </authorList>
    </citation>
    <scope>X-RAY CRYSTALLOGRAPHY (2.8 ANGSTROMS) OF 23-219</scope>
    <scope>SUBUNIT</scope>
    <scope>DISULFIDE BONDS</scope>
</reference>
<reference evidence="16" key="15">
    <citation type="journal article" date="2010" name="J. Mol. Biol.">
        <title>Structural basis for the dual recognition of IL-12 and IL-23 by ustekinumab.</title>
        <authorList>
            <person name="Luo J."/>
            <person name="Wu S.J."/>
            <person name="Lacy E.R."/>
            <person name="Orlovsky Y."/>
            <person name="Baker A."/>
            <person name="Teplyakov A."/>
            <person name="Obmolova G."/>
            <person name="Heavner G.A."/>
            <person name="Richter H.T."/>
            <person name="Benson J."/>
        </authorList>
    </citation>
    <scope>X-RAY CRYSTALLOGRAPHY (3.00 ANGSTROMS) OF 23-219</scope>
    <scope>DISULFIDE BOND</scope>
</reference>